<name>CYT3_MOUSE</name>
<sequence length="103" mass="11640">MSQENLKIKGGLSEARPATPEIQMIADKVRPLLEEQTNEKYEKFEAVEYKSQVVAGQNLFIKIDVGNGCFLHMKVFRGLSGEDDLKLKGYQTNKTKTDELTSM</sequence>
<comment type="function">
    <text>This is an intracellular thiol proteinase inhibitor.</text>
</comment>
<comment type="subcellular location">
    <subcellularLocation>
        <location evidence="1">Cytoplasm</location>
    </subcellularLocation>
</comment>
<comment type="similarity">
    <text evidence="2">Belongs to the cystatin family.</text>
</comment>
<gene>
    <name type="primary">Stfa3</name>
    <name type="synonym">Stf-3</name>
    <name type="synonym">Stf3</name>
</gene>
<protein>
    <recommendedName>
        <fullName>Stefin-3</fullName>
    </recommendedName>
</protein>
<dbReference type="EMBL" id="M92417">
    <property type="status" value="NOT_ANNOTATED_CDS"/>
    <property type="molecule type" value="mRNA"/>
</dbReference>
<dbReference type="EMBL" id="AY169236">
    <property type="protein sequence ID" value="AAN87899.1"/>
    <property type="molecule type" value="mRNA"/>
</dbReference>
<dbReference type="EMBL" id="AK014349">
    <property type="protein sequence ID" value="BAB29290.1"/>
    <property type="molecule type" value="mRNA"/>
</dbReference>
<dbReference type="EMBL" id="AC074229">
    <property type="status" value="NOT_ANNOTATED_CDS"/>
    <property type="molecule type" value="Genomic_DNA"/>
</dbReference>
<dbReference type="EMBL" id="CH466521">
    <property type="protein sequence ID" value="EDK97922.1"/>
    <property type="molecule type" value="Genomic_DNA"/>
</dbReference>
<dbReference type="EMBL" id="BC107224">
    <property type="protein sequence ID" value="AAI07225.1"/>
    <property type="molecule type" value="mRNA"/>
</dbReference>
<dbReference type="EMBL" id="BC107225">
    <property type="protein sequence ID" value="AAI07226.1"/>
    <property type="molecule type" value="mRNA"/>
</dbReference>
<dbReference type="CCDS" id="CCDS28153.1"/>
<dbReference type="PIR" id="A46011">
    <property type="entry name" value="A46011"/>
</dbReference>
<dbReference type="RefSeq" id="NP_079564.1">
    <property type="nucleotide sequence ID" value="NM_025288.2"/>
</dbReference>
<dbReference type="SMR" id="P35173"/>
<dbReference type="FunCoup" id="P35173">
    <property type="interactions" value="102"/>
</dbReference>
<dbReference type="STRING" id="10090.ENSMUSP00000067445"/>
<dbReference type="BindingDB" id="P35173"/>
<dbReference type="ChEMBL" id="CHEMBL5291583"/>
<dbReference type="MEROPS" id="I25.001"/>
<dbReference type="iPTMnet" id="P35173"/>
<dbReference type="PhosphoSitePlus" id="P35173"/>
<dbReference type="PaxDb" id="10090-ENSMUSP00000067445"/>
<dbReference type="ProteomicsDB" id="279164"/>
<dbReference type="DNASU" id="20863"/>
<dbReference type="Ensembl" id="ENSMUST00000068182.3">
    <property type="protein sequence ID" value="ENSMUSP00000067445.3"/>
    <property type="gene ID" value="ENSMUSG00000054905.3"/>
</dbReference>
<dbReference type="GeneID" id="20863"/>
<dbReference type="KEGG" id="mmu:20863"/>
<dbReference type="UCSC" id="uc007zco.1">
    <property type="organism name" value="mouse"/>
</dbReference>
<dbReference type="AGR" id="MGI:106196"/>
<dbReference type="CTD" id="20863"/>
<dbReference type="MGI" id="MGI:106196">
    <property type="gene designation" value="Stfa3"/>
</dbReference>
<dbReference type="VEuPathDB" id="HostDB:ENSMUSG00000054905"/>
<dbReference type="eggNOG" id="ENOG502SF2X">
    <property type="taxonomic scope" value="Eukaryota"/>
</dbReference>
<dbReference type="GeneTree" id="ENSGT00940000155717"/>
<dbReference type="HOGENOM" id="CLU_150234_2_0_1"/>
<dbReference type="InParanoid" id="P35173"/>
<dbReference type="OMA" id="EICIHIM"/>
<dbReference type="OrthoDB" id="2429551at2759"/>
<dbReference type="PhylomeDB" id="P35173"/>
<dbReference type="TreeFam" id="TF333174"/>
<dbReference type="BioGRID-ORCS" id="20863">
    <property type="hits" value="2 hits in 56 CRISPR screens"/>
</dbReference>
<dbReference type="ChiTaRS" id="Stfa3">
    <property type="organism name" value="mouse"/>
</dbReference>
<dbReference type="PRO" id="PR:P35173"/>
<dbReference type="Proteomes" id="UP000000589">
    <property type="component" value="Chromosome 16"/>
</dbReference>
<dbReference type="RNAct" id="P35173">
    <property type="molecule type" value="protein"/>
</dbReference>
<dbReference type="Bgee" id="ENSMUSG00000054905">
    <property type="expression patterns" value="Expressed in umbilical cord and 65 other cell types or tissues"/>
</dbReference>
<dbReference type="GO" id="GO:0005737">
    <property type="term" value="C:cytoplasm"/>
    <property type="evidence" value="ECO:0007669"/>
    <property type="project" value="UniProtKB-SubCell"/>
</dbReference>
<dbReference type="GO" id="GO:0004869">
    <property type="term" value="F:cysteine-type endopeptidase inhibitor activity"/>
    <property type="evidence" value="ECO:0007669"/>
    <property type="project" value="UniProtKB-KW"/>
</dbReference>
<dbReference type="CDD" id="cd00042">
    <property type="entry name" value="CY"/>
    <property type="match status" value="1"/>
</dbReference>
<dbReference type="FunFam" id="3.10.450.10:FF:000001">
    <property type="entry name" value="Cystatin-A"/>
    <property type="match status" value="1"/>
</dbReference>
<dbReference type="Gene3D" id="3.10.450.10">
    <property type="match status" value="1"/>
</dbReference>
<dbReference type="InterPro" id="IPR000010">
    <property type="entry name" value="Cystatin_dom"/>
</dbReference>
<dbReference type="InterPro" id="IPR046350">
    <property type="entry name" value="Cystatin_sf"/>
</dbReference>
<dbReference type="InterPro" id="IPR018073">
    <property type="entry name" value="Prot_inh_cystat_CS"/>
</dbReference>
<dbReference type="InterPro" id="IPR001713">
    <property type="entry name" value="Prot_inh_stefin"/>
</dbReference>
<dbReference type="PANTHER" id="PTHR11414">
    <property type="entry name" value="CYSTATIN FAMILY MEMBER"/>
    <property type="match status" value="1"/>
</dbReference>
<dbReference type="PANTHER" id="PTHR11414:SF26">
    <property type="entry name" value="STEFIN-3"/>
    <property type="match status" value="1"/>
</dbReference>
<dbReference type="Pfam" id="PF00031">
    <property type="entry name" value="Cystatin"/>
    <property type="match status" value="1"/>
</dbReference>
<dbReference type="PRINTS" id="PR00295">
    <property type="entry name" value="STEFINA"/>
</dbReference>
<dbReference type="SMART" id="SM00043">
    <property type="entry name" value="CY"/>
    <property type="match status" value="1"/>
</dbReference>
<dbReference type="SUPFAM" id="SSF54403">
    <property type="entry name" value="Cystatin/monellin"/>
    <property type="match status" value="1"/>
</dbReference>
<dbReference type="PROSITE" id="PS00287">
    <property type="entry name" value="CYSTATIN"/>
    <property type="match status" value="1"/>
</dbReference>
<feature type="chain" id="PRO_0000207146" description="Stefin-3">
    <location>
        <begin position="1"/>
        <end position="103"/>
    </location>
</feature>
<feature type="short sequence motif" description="Secondary area of contact">
    <location>
        <begin position="52"/>
        <end position="56"/>
    </location>
</feature>
<feature type="site" description="Reactive site" evidence="1">
    <location>
        <position position="10"/>
    </location>
</feature>
<evidence type="ECO:0000250" key="1"/>
<evidence type="ECO:0000305" key="2"/>
<proteinExistence type="inferred from homology"/>
<keyword id="KW-0963">Cytoplasm</keyword>
<keyword id="KW-0646">Protease inhibitor</keyword>
<keyword id="KW-1185">Reference proteome</keyword>
<keyword id="KW-0789">Thiol protease inhibitor</keyword>
<reference key="1">
    <citation type="journal article" date="1993" name="Genomics">
        <title>Molecular characterization and mapping of murine genes encoding three members of the stefin family of cysteine proteinase inhibitors.</title>
        <authorList>
            <person name="Tsui F.W."/>
            <person name="Tsui H.W."/>
            <person name="Mok S."/>
            <person name="Mlinaric I."/>
            <person name="Copeland N.G."/>
            <person name="Gilbert D.J."/>
            <person name="Jenkins N.A."/>
            <person name="Siminovitch K.A."/>
        </authorList>
    </citation>
    <scope>NUCLEOTIDE SEQUENCE [MRNA]</scope>
    <source>
        <strain>C57BL/6J</strain>
        <tissue>Bone marrow</tissue>
    </source>
</reference>
<reference key="2">
    <citation type="submission" date="2002-10" db="EMBL/GenBank/DDBJ databases">
        <authorList>
            <person name="Gao J."/>
            <person name="Teuscher C."/>
        </authorList>
    </citation>
    <scope>NUCLEOTIDE SEQUENCE [MRNA]</scope>
    <source>
        <strain>A/J</strain>
        <tissue>Spleen</tissue>
    </source>
</reference>
<reference key="3">
    <citation type="journal article" date="2005" name="Science">
        <title>The transcriptional landscape of the mammalian genome.</title>
        <authorList>
            <person name="Carninci P."/>
            <person name="Kasukawa T."/>
            <person name="Katayama S."/>
            <person name="Gough J."/>
            <person name="Frith M.C."/>
            <person name="Maeda N."/>
            <person name="Oyama R."/>
            <person name="Ravasi T."/>
            <person name="Lenhard B."/>
            <person name="Wells C."/>
            <person name="Kodzius R."/>
            <person name="Shimokawa K."/>
            <person name="Bajic V.B."/>
            <person name="Brenner S.E."/>
            <person name="Batalov S."/>
            <person name="Forrest A.R."/>
            <person name="Zavolan M."/>
            <person name="Davis M.J."/>
            <person name="Wilming L.G."/>
            <person name="Aidinis V."/>
            <person name="Allen J.E."/>
            <person name="Ambesi-Impiombato A."/>
            <person name="Apweiler R."/>
            <person name="Aturaliya R.N."/>
            <person name="Bailey T.L."/>
            <person name="Bansal M."/>
            <person name="Baxter L."/>
            <person name="Beisel K.W."/>
            <person name="Bersano T."/>
            <person name="Bono H."/>
            <person name="Chalk A.M."/>
            <person name="Chiu K.P."/>
            <person name="Choudhary V."/>
            <person name="Christoffels A."/>
            <person name="Clutterbuck D.R."/>
            <person name="Crowe M.L."/>
            <person name="Dalla E."/>
            <person name="Dalrymple B.P."/>
            <person name="de Bono B."/>
            <person name="Della Gatta G."/>
            <person name="di Bernardo D."/>
            <person name="Down T."/>
            <person name="Engstrom P."/>
            <person name="Fagiolini M."/>
            <person name="Faulkner G."/>
            <person name="Fletcher C.F."/>
            <person name="Fukushima T."/>
            <person name="Furuno M."/>
            <person name="Futaki S."/>
            <person name="Gariboldi M."/>
            <person name="Georgii-Hemming P."/>
            <person name="Gingeras T.R."/>
            <person name="Gojobori T."/>
            <person name="Green R.E."/>
            <person name="Gustincich S."/>
            <person name="Harbers M."/>
            <person name="Hayashi Y."/>
            <person name="Hensch T.K."/>
            <person name="Hirokawa N."/>
            <person name="Hill D."/>
            <person name="Huminiecki L."/>
            <person name="Iacono M."/>
            <person name="Ikeo K."/>
            <person name="Iwama A."/>
            <person name="Ishikawa T."/>
            <person name="Jakt M."/>
            <person name="Kanapin A."/>
            <person name="Katoh M."/>
            <person name="Kawasawa Y."/>
            <person name="Kelso J."/>
            <person name="Kitamura H."/>
            <person name="Kitano H."/>
            <person name="Kollias G."/>
            <person name="Krishnan S.P."/>
            <person name="Kruger A."/>
            <person name="Kummerfeld S.K."/>
            <person name="Kurochkin I.V."/>
            <person name="Lareau L.F."/>
            <person name="Lazarevic D."/>
            <person name="Lipovich L."/>
            <person name="Liu J."/>
            <person name="Liuni S."/>
            <person name="McWilliam S."/>
            <person name="Madan Babu M."/>
            <person name="Madera M."/>
            <person name="Marchionni L."/>
            <person name="Matsuda H."/>
            <person name="Matsuzawa S."/>
            <person name="Miki H."/>
            <person name="Mignone F."/>
            <person name="Miyake S."/>
            <person name="Morris K."/>
            <person name="Mottagui-Tabar S."/>
            <person name="Mulder N."/>
            <person name="Nakano N."/>
            <person name="Nakauchi H."/>
            <person name="Ng P."/>
            <person name="Nilsson R."/>
            <person name="Nishiguchi S."/>
            <person name="Nishikawa S."/>
            <person name="Nori F."/>
            <person name="Ohara O."/>
            <person name="Okazaki Y."/>
            <person name="Orlando V."/>
            <person name="Pang K.C."/>
            <person name="Pavan W.J."/>
            <person name="Pavesi G."/>
            <person name="Pesole G."/>
            <person name="Petrovsky N."/>
            <person name="Piazza S."/>
            <person name="Reed J."/>
            <person name="Reid J.F."/>
            <person name="Ring B.Z."/>
            <person name="Ringwald M."/>
            <person name="Rost B."/>
            <person name="Ruan Y."/>
            <person name="Salzberg S.L."/>
            <person name="Sandelin A."/>
            <person name="Schneider C."/>
            <person name="Schoenbach C."/>
            <person name="Sekiguchi K."/>
            <person name="Semple C.A."/>
            <person name="Seno S."/>
            <person name="Sessa L."/>
            <person name="Sheng Y."/>
            <person name="Shibata Y."/>
            <person name="Shimada H."/>
            <person name="Shimada K."/>
            <person name="Silva D."/>
            <person name="Sinclair B."/>
            <person name="Sperling S."/>
            <person name="Stupka E."/>
            <person name="Sugiura K."/>
            <person name="Sultana R."/>
            <person name="Takenaka Y."/>
            <person name="Taki K."/>
            <person name="Tammoja K."/>
            <person name="Tan S.L."/>
            <person name="Tang S."/>
            <person name="Taylor M.S."/>
            <person name="Tegner J."/>
            <person name="Teichmann S.A."/>
            <person name="Ueda H.R."/>
            <person name="van Nimwegen E."/>
            <person name="Verardo R."/>
            <person name="Wei C.L."/>
            <person name="Yagi K."/>
            <person name="Yamanishi H."/>
            <person name="Zabarovsky E."/>
            <person name="Zhu S."/>
            <person name="Zimmer A."/>
            <person name="Hide W."/>
            <person name="Bult C."/>
            <person name="Grimmond S.M."/>
            <person name="Teasdale R.D."/>
            <person name="Liu E.T."/>
            <person name="Brusic V."/>
            <person name="Quackenbush J."/>
            <person name="Wahlestedt C."/>
            <person name="Mattick J.S."/>
            <person name="Hume D.A."/>
            <person name="Kai C."/>
            <person name="Sasaki D."/>
            <person name="Tomaru Y."/>
            <person name="Fukuda S."/>
            <person name="Kanamori-Katayama M."/>
            <person name="Suzuki M."/>
            <person name="Aoki J."/>
            <person name="Arakawa T."/>
            <person name="Iida J."/>
            <person name="Imamura K."/>
            <person name="Itoh M."/>
            <person name="Kato T."/>
            <person name="Kawaji H."/>
            <person name="Kawagashira N."/>
            <person name="Kawashima T."/>
            <person name="Kojima M."/>
            <person name="Kondo S."/>
            <person name="Konno H."/>
            <person name="Nakano K."/>
            <person name="Ninomiya N."/>
            <person name="Nishio T."/>
            <person name="Okada M."/>
            <person name="Plessy C."/>
            <person name="Shibata K."/>
            <person name="Shiraki T."/>
            <person name="Suzuki S."/>
            <person name="Tagami M."/>
            <person name="Waki K."/>
            <person name="Watahiki A."/>
            <person name="Okamura-Oho Y."/>
            <person name="Suzuki H."/>
            <person name="Kawai J."/>
            <person name="Hayashizaki Y."/>
        </authorList>
    </citation>
    <scope>NUCLEOTIDE SEQUENCE [LARGE SCALE MRNA]</scope>
</reference>
<reference key="4">
    <citation type="journal article" date="2009" name="PLoS Biol.">
        <title>Lineage-specific biology revealed by a finished genome assembly of the mouse.</title>
        <authorList>
            <person name="Church D.M."/>
            <person name="Goodstadt L."/>
            <person name="Hillier L.W."/>
            <person name="Zody M.C."/>
            <person name="Goldstein S."/>
            <person name="She X."/>
            <person name="Bult C.J."/>
            <person name="Agarwala R."/>
            <person name="Cherry J.L."/>
            <person name="DiCuccio M."/>
            <person name="Hlavina W."/>
            <person name="Kapustin Y."/>
            <person name="Meric P."/>
            <person name="Maglott D."/>
            <person name="Birtle Z."/>
            <person name="Marques A.C."/>
            <person name="Graves T."/>
            <person name="Zhou S."/>
            <person name="Teague B."/>
            <person name="Potamousis K."/>
            <person name="Churas C."/>
            <person name="Place M."/>
            <person name="Herschleb J."/>
            <person name="Runnheim R."/>
            <person name="Forrest D."/>
            <person name="Amos-Landgraf J."/>
            <person name="Schwartz D.C."/>
            <person name="Cheng Z."/>
            <person name="Lindblad-Toh K."/>
            <person name="Eichler E.E."/>
            <person name="Ponting C.P."/>
        </authorList>
    </citation>
    <scope>NUCLEOTIDE SEQUENCE [LARGE SCALE GENOMIC DNA]</scope>
    <source>
        <strain>C57BL/6J</strain>
    </source>
</reference>
<reference key="5">
    <citation type="submission" date="2005-07" db="EMBL/GenBank/DDBJ databases">
        <authorList>
            <person name="Mural R.J."/>
            <person name="Adams M.D."/>
            <person name="Myers E.W."/>
            <person name="Smith H.O."/>
            <person name="Venter J.C."/>
        </authorList>
    </citation>
    <scope>NUCLEOTIDE SEQUENCE [LARGE SCALE GENOMIC DNA]</scope>
</reference>
<reference key="6">
    <citation type="journal article" date="2004" name="Genome Res.">
        <title>The status, quality, and expansion of the NIH full-length cDNA project: the Mammalian Gene Collection (MGC).</title>
        <authorList>
            <consortium name="The MGC Project Team"/>
        </authorList>
    </citation>
    <scope>NUCLEOTIDE SEQUENCE [LARGE SCALE MRNA]</scope>
</reference>
<accession>P35173</accession>
<accession>Q540I0</accession>
<organism>
    <name type="scientific">Mus musculus</name>
    <name type="common">Mouse</name>
    <dbReference type="NCBI Taxonomy" id="10090"/>
    <lineage>
        <taxon>Eukaryota</taxon>
        <taxon>Metazoa</taxon>
        <taxon>Chordata</taxon>
        <taxon>Craniata</taxon>
        <taxon>Vertebrata</taxon>
        <taxon>Euteleostomi</taxon>
        <taxon>Mammalia</taxon>
        <taxon>Eutheria</taxon>
        <taxon>Euarchontoglires</taxon>
        <taxon>Glires</taxon>
        <taxon>Rodentia</taxon>
        <taxon>Myomorpha</taxon>
        <taxon>Muroidea</taxon>
        <taxon>Muridae</taxon>
        <taxon>Murinae</taxon>
        <taxon>Mus</taxon>
        <taxon>Mus</taxon>
    </lineage>
</organism>